<name>LIPA_NOCFA</name>
<protein>
    <recommendedName>
        <fullName evidence="1">Lipoyl synthase</fullName>
        <ecNumber evidence="1">2.8.1.8</ecNumber>
    </recommendedName>
    <alternativeName>
        <fullName evidence="1">Lip-syn</fullName>
        <shortName evidence="1">LS</shortName>
    </alternativeName>
    <alternativeName>
        <fullName evidence="1">Lipoate synthase</fullName>
    </alternativeName>
    <alternativeName>
        <fullName evidence="1">Lipoic acid synthase</fullName>
    </alternativeName>
    <alternativeName>
        <fullName evidence="1">Sulfur insertion protein LipA</fullName>
    </alternativeName>
</protein>
<organism>
    <name type="scientific">Nocardia farcinica (strain IFM 10152)</name>
    <dbReference type="NCBI Taxonomy" id="247156"/>
    <lineage>
        <taxon>Bacteria</taxon>
        <taxon>Bacillati</taxon>
        <taxon>Actinomycetota</taxon>
        <taxon>Actinomycetes</taxon>
        <taxon>Mycobacteriales</taxon>
        <taxon>Nocardiaceae</taxon>
        <taxon>Nocardia</taxon>
    </lineage>
</organism>
<gene>
    <name evidence="1" type="primary">lipA</name>
    <name type="ordered locus">NFA_16860</name>
</gene>
<accession>Q5YZ59</accession>
<feature type="chain" id="PRO_0000325280" description="Lipoyl synthase">
    <location>
        <begin position="1"/>
        <end position="352"/>
    </location>
</feature>
<feature type="domain" description="Radical SAM core" evidence="2">
    <location>
        <begin position="83"/>
        <end position="297"/>
    </location>
</feature>
<feature type="region of interest" description="Disordered" evidence="3">
    <location>
        <begin position="1"/>
        <end position="21"/>
    </location>
</feature>
<feature type="binding site" evidence="1">
    <location>
        <position position="71"/>
    </location>
    <ligand>
        <name>[4Fe-4S] cluster</name>
        <dbReference type="ChEBI" id="CHEBI:49883"/>
        <label>1</label>
    </ligand>
</feature>
<feature type="binding site" evidence="1">
    <location>
        <position position="76"/>
    </location>
    <ligand>
        <name>[4Fe-4S] cluster</name>
        <dbReference type="ChEBI" id="CHEBI:49883"/>
        <label>1</label>
    </ligand>
</feature>
<feature type="binding site" evidence="1">
    <location>
        <position position="82"/>
    </location>
    <ligand>
        <name>[4Fe-4S] cluster</name>
        <dbReference type="ChEBI" id="CHEBI:49883"/>
        <label>1</label>
    </ligand>
</feature>
<feature type="binding site" evidence="1">
    <location>
        <position position="97"/>
    </location>
    <ligand>
        <name>[4Fe-4S] cluster</name>
        <dbReference type="ChEBI" id="CHEBI:49883"/>
        <label>2</label>
        <note>4Fe-4S-S-AdoMet</note>
    </ligand>
</feature>
<feature type="binding site" evidence="1">
    <location>
        <position position="101"/>
    </location>
    <ligand>
        <name>[4Fe-4S] cluster</name>
        <dbReference type="ChEBI" id="CHEBI:49883"/>
        <label>2</label>
        <note>4Fe-4S-S-AdoMet</note>
    </ligand>
</feature>
<feature type="binding site" evidence="1">
    <location>
        <position position="104"/>
    </location>
    <ligand>
        <name>[4Fe-4S] cluster</name>
        <dbReference type="ChEBI" id="CHEBI:49883"/>
        <label>2</label>
        <note>4Fe-4S-S-AdoMet</note>
    </ligand>
</feature>
<feature type="binding site" evidence="1">
    <location>
        <position position="308"/>
    </location>
    <ligand>
        <name>[4Fe-4S] cluster</name>
        <dbReference type="ChEBI" id="CHEBI:49883"/>
        <label>1</label>
    </ligand>
</feature>
<keyword id="KW-0004">4Fe-4S</keyword>
<keyword id="KW-0963">Cytoplasm</keyword>
<keyword id="KW-0408">Iron</keyword>
<keyword id="KW-0411">Iron-sulfur</keyword>
<keyword id="KW-0479">Metal-binding</keyword>
<keyword id="KW-1185">Reference proteome</keyword>
<keyword id="KW-0949">S-adenosyl-L-methionine</keyword>
<keyword id="KW-0808">Transferase</keyword>
<sequence length="352" mass="38871">MTSVDTPTPHGGTPAPAPATANGRKLLRIEARNAQTPIERKPKWIRTRATMGPEYSELKGLVKREGLHTVCEEAGCPNIFECWEDREATFLIGGEQCTRRCDFCQIDTGKPAALDRDEPRRVAESVQAMGLRYSTITGVARDDLEDGGAWLYAETVRAIKRLNPATGVELLIPDFNADPDQLAEVFSARPEVLAHNLETVPRIFKRIRPAFRYERSLSVLTAAREAGLVTKSNLILGMGETPEEVTEAMRDLHEAGCDILTITQYLRPSPRHHPVDRWVKPEEFVEHSRVAEEIGFAGVMAGPLVRSSYRAGRLYAQAMAHHGREIPPAMAHLAEEGTASQEASAVLARFGS</sequence>
<evidence type="ECO:0000255" key="1">
    <source>
        <dbReference type="HAMAP-Rule" id="MF_00206"/>
    </source>
</evidence>
<evidence type="ECO:0000255" key="2">
    <source>
        <dbReference type="PROSITE-ProRule" id="PRU01266"/>
    </source>
</evidence>
<evidence type="ECO:0000256" key="3">
    <source>
        <dbReference type="SAM" id="MobiDB-lite"/>
    </source>
</evidence>
<dbReference type="EC" id="2.8.1.8" evidence="1"/>
<dbReference type="EMBL" id="AP006618">
    <property type="protein sequence ID" value="BAD56532.1"/>
    <property type="molecule type" value="Genomic_DNA"/>
</dbReference>
<dbReference type="RefSeq" id="WP_011208217.1">
    <property type="nucleotide sequence ID" value="NC_006361.1"/>
</dbReference>
<dbReference type="SMR" id="Q5YZ59"/>
<dbReference type="STRING" id="247156.NFA_16860"/>
<dbReference type="GeneID" id="61132470"/>
<dbReference type="KEGG" id="nfa:NFA_16860"/>
<dbReference type="eggNOG" id="COG0320">
    <property type="taxonomic scope" value="Bacteria"/>
</dbReference>
<dbReference type="HOGENOM" id="CLU_033144_2_1_11"/>
<dbReference type="OrthoDB" id="9787898at2"/>
<dbReference type="UniPathway" id="UPA00538">
    <property type="reaction ID" value="UER00593"/>
</dbReference>
<dbReference type="Proteomes" id="UP000006820">
    <property type="component" value="Chromosome"/>
</dbReference>
<dbReference type="GO" id="GO:0005737">
    <property type="term" value="C:cytoplasm"/>
    <property type="evidence" value="ECO:0007669"/>
    <property type="project" value="UniProtKB-SubCell"/>
</dbReference>
<dbReference type="GO" id="GO:0051539">
    <property type="term" value="F:4 iron, 4 sulfur cluster binding"/>
    <property type="evidence" value="ECO:0007669"/>
    <property type="project" value="UniProtKB-UniRule"/>
</dbReference>
<dbReference type="GO" id="GO:0016992">
    <property type="term" value="F:lipoate synthase activity"/>
    <property type="evidence" value="ECO:0007669"/>
    <property type="project" value="UniProtKB-UniRule"/>
</dbReference>
<dbReference type="GO" id="GO:0046872">
    <property type="term" value="F:metal ion binding"/>
    <property type="evidence" value="ECO:0007669"/>
    <property type="project" value="UniProtKB-KW"/>
</dbReference>
<dbReference type="CDD" id="cd01335">
    <property type="entry name" value="Radical_SAM"/>
    <property type="match status" value="1"/>
</dbReference>
<dbReference type="FunFam" id="3.20.20.70:FF:000116">
    <property type="entry name" value="Lipoyl synthase"/>
    <property type="match status" value="1"/>
</dbReference>
<dbReference type="Gene3D" id="3.20.20.70">
    <property type="entry name" value="Aldolase class I"/>
    <property type="match status" value="1"/>
</dbReference>
<dbReference type="HAMAP" id="MF_00206">
    <property type="entry name" value="Lipoyl_synth"/>
    <property type="match status" value="1"/>
</dbReference>
<dbReference type="InterPro" id="IPR013785">
    <property type="entry name" value="Aldolase_TIM"/>
</dbReference>
<dbReference type="InterPro" id="IPR006638">
    <property type="entry name" value="Elp3/MiaA/NifB-like_rSAM"/>
</dbReference>
<dbReference type="InterPro" id="IPR031691">
    <property type="entry name" value="LIAS_N"/>
</dbReference>
<dbReference type="InterPro" id="IPR003698">
    <property type="entry name" value="Lipoyl_synth"/>
</dbReference>
<dbReference type="InterPro" id="IPR007197">
    <property type="entry name" value="rSAM"/>
</dbReference>
<dbReference type="NCBIfam" id="TIGR00510">
    <property type="entry name" value="lipA"/>
    <property type="match status" value="1"/>
</dbReference>
<dbReference type="NCBIfam" id="NF004019">
    <property type="entry name" value="PRK05481.1"/>
    <property type="match status" value="1"/>
</dbReference>
<dbReference type="NCBIfam" id="NF009544">
    <property type="entry name" value="PRK12928.1"/>
    <property type="match status" value="1"/>
</dbReference>
<dbReference type="PANTHER" id="PTHR10949">
    <property type="entry name" value="LIPOYL SYNTHASE"/>
    <property type="match status" value="1"/>
</dbReference>
<dbReference type="PANTHER" id="PTHR10949:SF0">
    <property type="entry name" value="LIPOYL SYNTHASE, MITOCHONDRIAL"/>
    <property type="match status" value="1"/>
</dbReference>
<dbReference type="Pfam" id="PF16881">
    <property type="entry name" value="LIAS_N"/>
    <property type="match status" value="1"/>
</dbReference>
<dbReference type="Pfam" id="PF04055">
    <property type="entry name" value="Radical_SAM"/>
    <property type="match status" value="1"/>
</dbReference>
<dbReference type="PIRSF" id="PIRSF005963">
    <property type="entry name" value="Lipoyl_synth"/>
    <property type="match status" value="1"/>
</dbReference>
<dbReference type="SFLD" id="SFLDF00271">
    <property type="entry name" value="lipoyl_synthase"/>
    <property type="match status" value="1"/>
</dbReference>
<dbReference type="SFLD" id="SFLDS00029">
    <property type="entry name" value="Radical_SAM"/>
    <property type="match status" value="1"/>
</dbReference>
<dbReference type="SMART" id="SM00729">
    <property type="entry name" value="Elp3"/>
    <property type="match status" value="1"/>
</dbReference>
<dbReference type="SUPFAM" id="SSF102114">
    <property type="entry name" value="Radical SAM enzymes"/>
    <property type="match status" value="1"/>
</dbReference>
<dbReference type="PROSITE" id="PS51918">
    <property type="entry name" value="RADICAL_SAM"/>
    <property type="match status" value="1"/>
</dbReference>
<proteinExistence type="inferred from homology"/>
<comment type="function">
    <text evidence="1">Catalyzes the radical-mediated insertion of two sulfur atoms into the C-6 and C-8 positions of the octanoyl moiety bound to the lipoyl domains of lipoate-dependent enzymes, thereby converting the octanoylated domains into lipoylated derivatives.</text>
</comment>
<comment type="catalytic activity">
    <reaction evidence="1">
        <text>[[Fe-S] cluster scaffold protein carrying a second [4Fe-4S](2+) cluster] + N(6)-octanoyl-L-lysyl-[protein] + 2 oxidized [2Fe-2S]-[ferredoxin] + 2 S-adenosyl-L-methionine + 4 H(+) = [[Fe-S] cluster scaffold protein] + N(6)-[(R)-dihydrolipoyl]-L-lysyl-[protein] + 4 Fe(3+) + 2 hydrogen sulfide + 2 5'-deoxyadenosine + 2 L-methionine + 2 reduced [2Fe-2S]-[ferredoxin]</text>
        <dbReference type="Rhea" id="RHEA:16585"/>
        <dbReference type="Rhea" id="RHEA-COMP:9928"/>
        <dbReference type="Rhea" id="RHEA-COMP:10000"/>
        <dbReference type="Rhea" id="RHEA-COMP:10001"/>
        <dbReference type="Rhea" id="RHEA-COMP:10475"/>
        <dbReference type="Rhea" id="RHEA-COMP:14568"/>
        <dbReference type="Rhea" id="RHEA-COMP:14569"/>
        <dbReference type="ChEBI" id="CHEBI:15378"/>
        <dbReference type="ChEBI" id="CHEBI:17319"/>
        <dbReference type="ChEBI" id="CHEBI:29034"/>
        <dbReference type="ChEBI" id="CHEBI:29919"/>
        <dbReference type="ChEBI" id="CHEBI:33722"/>
        <dbReference type="ChEBI" id="CHEBI:33737"/>
        <dbReference type="ChEBI" id="CHEBI:33738"/>
        <dbReference type="ChEBI" id="CHEBI:57844"/>
        <dbReference type="ChEBI" id="CHEBI:59789"/>
        <dbReference type="ChEBI" id="CHEBI:78809"/>
        <dbReference type="ChEBI" id="CHEBI:83100"/>
        <dbReference type="EC" id="2.8.1.8"/>
    </reaction>
</comment>
<comment type="cofactor">
    <cofactor evidence="1">
        <name>[4Fe-4S] cluster</name>
        <dbReference type="ChEBI" id="CHEBI:49883"/>
    </cofactor>
    <text evidence="1">Binds 2 [4Fe-4S] clusters per subunit. One cluster is coordinated with 3 cysteines and an exchangeable S-adenosyl-L-methionine.</text>
</comment>
<comment type="pathway">
    <text evidence="1">Protein modification; protein lipoylation via endogenous pathway; protein N(6)-(lipoyl)lysine from octanoyl-[acyl-carrier-protein]: step 2/2.</text>
</comment>
<comment type="subcellular location">
    <subcellularLocation>
        <location evidence="1">Cytoplasm</location>
    </subcellularLocation>
</comment>
<comment type="similarity">
    <text evidence="1">Belongs to the radical SAM superfamily. Lipoyl synthase family.</text>
</comment>
<reference key="1">
    <citation type="journal article" date="2004" name="Proc. Natl. Acad. Sci. U.S.A.">
        <title>The complete genomic sequence of Nocardia farcinica IFM 10152.</title>
        <authorList>
            <person name="Ishikawa J."/>
            <person name="Yamashita A."/>
            <person name="Mikami Y."/>
            <person name="Hoshino Y."/>
            <person name="Kurita H."/>
            <person name="Hotta K."/>
            <person name="Shiba T."/>
            <person name="Hattori M."/>
        </authorList>
    </citation>
    <scope>NUCLEOTIDE SEQUENCE [LARGE SCALE GENOMIC DNA]</scope>
    <source>
        <strain>IFM 10152</strain>
    </source>
</reference>